<gene>
    <name type="ordered locus">YPTB0597</name>
</gene>
<dbReference type="EC" id="3.6.1.73" evidence="1"/>
<dbReference type="EMBL" id="BX936398">
    <property type="protein sequence ID" value="CAH19837.1"/>
    <property type="molecule type" value="Genomic_DNA"/>
</dbReference>
<dbReference type="RefSeq" id="WP_011191695.1">
    <property type="nucleotide sequence ID" value="NC_006155.1"/>
</dbReference>
<dbReference type="SMR" id="Q66EU4"/>
<dbReference type="GeneID" id="49787403"/>
<dbReference type="KEGG" id="ypo:BZ17_1963"/>
<dbReference type="KEGG" id="yps:YPTB0597"/>
<dbReference type="PATRIC" id="fig|273123.14.peg.2088"/>
<dbReference type="Proteomes" id="UP000001011">
    <property type="component" value="Chromosome"/>
</dbReference>
<dbReference type="GO" id="GO:0103023">
    <property type="term" value="F:ITPase activity"/>
    <property type="evidence" value="ECO:0007669"/>
    <property type="project" value="UniProtKB-EC"/>
</dbReference>
<dbReference type="GO" id="GO:0046872">
    <property type="term" value="F:metal ion binding"/>
    <property type="evidence" value="ECO:0007669"/>
    <property type="project" value="UniProtKB-KW"/>
</dbReference>
<dbReference type="GO" id="GO:0000166">
    <property type="term" value="F:nucleotide binding"/>
    <property type="evidence" value="ECO:0007669"/>
    <property type="project" value="UniProtKB-KW"/>
</dbReference>
<dbReference type="GO" id="GO:0017111">
    <property type="term" value="F:ribonucleoside triphosphate phosphatase activity"/>
    <property type="evidence" value="ECO:0000250"/>
    <property type="project" value="UniProtKB"/>
</dbReference>
<dbReference type="GO" id="GO:0009117">
    <property type="term" value="P:nucleotide metabolic process"/>
    <property type="evidence" value="ECO:0007669"/>
    <property type="project" value="UniProtKB-KW"/>
</dbReference>
<dbReference type="GO" id="GO:0006772">
    <property type="term" value="P:thiamine metabolic process"/>
    <property type="evidence" value="ECO:0007669"/>
    <property type="project" value="TreeGrafter"/>
</dbReference>
<dbReference type="FunFam" id="3.90.950.10:FF:000002">
    <property type="entry name" value="Inosine/xanthosine triphosphatase"/>
    <property type="match status" value="1"/>
</dbReference>
<dbReference type="Gene3D" id="3.90.950.10">
    <property type="match status" value="1"/>
</dbReference>
<dbReference type="HAMAP" id="MF_00648">
    <property type="entry name" value="Non_canon_purine_NTPase_YjjX"/>
    <property type="match status" value="1"/>
</dbReference>
<dbReference type="InterPro" id="IPR029001">
    <property type="entry name" value="ITPase-like_fam"/>
</dbReference>
<dbReference type="InterPro" id="IPR002786">
    <property type="entry name" value="Non_canon_purine_NTPase"/>
</dbReference>
<dbReference type="InterPro" id="IPR026533">
    <property type="entry name" value="NTPase/PRRC1"/>
</dbReference>
<dbReference type="InterPro" id="IPR050299">
    <property type="entry name" value="YjjX_NTPase"/>
</dbReference>
<dbReference type="NCBIfam" id="TIGR00258">
    <property type="entry name" value="inosine/xanthosine triphosphatase"/>
    <property type="match status" value="1"/>
</dbReference>
<dbReference type="NCBIfam" id="NF003459">
    <property type="entry name" value="PRK05074.1"/>
    <property type="match status" value="1"/>
</dbReference>
<dbReference type="PANTHER" id="PTHR34699">
    <property type="match status" value="1"/>
</dbReference>
<dbReference type="PANTHER" id="PTHR34699:SF2">
    <property type="entry name" value="NON-CANONICAL PURINE NTP PHOSPHATASE_PRRC1 DOMAIN-CONTAINING PROTEIN"/>
    <property type="match status" value="1"/>
</dbReference>
<dbReference type="Pfam" id="PF01931">
    <property type="entry name" value="NTPase_I-T"/>
    <property type="match status" value="1"/>
</dbReference>
<dbReference type="SUPFAM" id="SSF52972">
    <property type="entry name" value="ITPase-like"/>
    <property type="match status" value="1"/>
</dbReference>
<organism>
    <name type="scientific">Yersinia pseudotuberculosis serotype I (strain IP32953)</name>
    <dbReference type="NCBI Taxonomy" id="273123"/>
    <lineage>
        <taxon>Bacteria</taxon>
        <taxon>Pseudomonadati</taxon>
        <taxon>Pseudomonadota</taxon>
        <taxon>Gammaproteobacteria</taxon>
        <taxon>Enterobacterales</taxon>
        <taxon>Yersiniaceae</taxon>
        <taxon>Yersinia</taxon>
    </lineage>
</organism>
<proteinExistence type="inferred from homology"/>
<evidence type="ECO:0000255" key="1">
    <source>
        <dbReference type="HAMAP-Rule" id="MF_00648"/>
    </source>
</evidence>
<comment type="function">
    <text evidence="1">Phosphatase that hydrolyzes non-canonical purine nucleotides such as XTP and ITP to their respective diphosphate derivatives. Probably excludes non-canonical purines from DNA/RNA precursor pool, thus preventing their incorporation into DNA/RNA and avoiding chromosomal lesions.</text>
</comment>
<comment type="catalytic activity">
    <reaction evidence="1">
        <text>XTP + H2O = XDP + phosphate + H(+)</text>
        <dbReference type="Rhea" id="RHEA:28406"/>
        <dbReference type="ChEBI" id="CHEBI:15377"/>
        <dbReference type="ChEBI" id="CHEBI:15378"/>
        <dbReference type="ChEBI" id="CHEBI:43474"/>
        <dbReference type="ChEBI" id="CHEBI:59884"/>
        <dbReference type="ChEBI" id="CHEBI:61314"/>
        <dbReference type="EC" id="3.6.1.73"/>
    </reaction>
</comment>
<comment type="catalytic activity">
    <reaction evidence="1">
        <text>ITP + H2O = IDP + phosphate + H(+)</text>
        <dbReference type="Rhea" id="RHEA:28330"/>
        <dbReference type="ChEBI" id="CHEBI:15377"/>
        <dbReference type="ChEBI" id="CHEBI:15378"/>
        <dbReference type="ChEBI" id="CHEBI:43474"/>
        <dbReference type="ChEBI" id="CHEBI:58280"/>
        <dbReference type="ChEBI" id="CHEBI:61402"/>
        <dbReference type="EC" id="3.6.1.73"/>
    </reaction>
</comment>
<comment type="cofactor">
    <cofactor evidence="1">
        <name>Mg(2+)</name>
        <dbReference type="ChEBI" id="CHEBI:18420"/>
    </cofactor>
    <cofactor evidence="1">
        <name>Mn(2+)</name>
        <dbReference type="ChEBI" id="CHEBI:29035"/>
    </cofactor>
    <text evidence="1">Binds 1 divalent metal cation per subunit; can use either Mg(2+) or Mn(2+).</text>
</comment>
<comment type="subunit">
    <text evidence="1">Homodimer.</text>
</comment>
<comment type="similarity">
    <text evidence="1">Belongs to the YjjX NTPase family.</text>
</comment>
<sequence>MYHVIAATTNPAKINAITLAFDDVYGPGQYRIEGVNVDSGVPLQPIGSTETRIGARQRVKNARQVRPEADFWVGIEAGIEDNMTFAWMVIEHLQARGESRSASLMLPDIILQGIRQGRELGDEMAVLSGISNVKQQGGAIGIFTQGKLTRTSVYHQALLLALVPFHNEIYQRPSPSKPAI</sequence>
<feature type="chain" id="PRO_0000156356" description="Inosine/xanthosine triphosphatase">
    <location>
        <begin position="1"/>
        <end position="180"/>
    </location>
</feature>
<feature type="binding site" evidence="1">
    <location>
        <begin position="8"/>
        <end position="13"/>
    </location>
    <ligand>
        <name>substrate</name>
    </ligand>
</feature>
<feature type="binding site" evidence="1">
    <location>
        <position position="38"/>
    </location>
    <ligand>
        <name>Mg(2+)</name>
        <dbReference type="ChEBI" id="CHEBI:18420"/>
    </ligand>
</feature>
<feature type="binding site" evidence="1">
    <location>
        <begin position="68"/>
        <end position="69"/>
    </location>
    <ligand>
        <name>substrate</name>
    </ligand>
</feature>
<feature type="binding site" evidence="1">
    <location>
        <position position="68"/>
    </location>
    <ligand>
        <name>Mg(2+)</name>
        <dbReference type="ChEBI" id="CHEBI:18420"/>
    </ligand>
</feature>
<name>NCPP_YERPS</name>
<reference key="1">
    <citation type="journal article" date="2004" name="Proc. Natl. Acad. Sci. U.S.A.">
        <title>Insights into the evolution of Yersinia pestis through whole-genome comparison with Yersinia pseudotuberculosis.</title>
        <authorList>
            <person name="Chain P.S.G."/>
            <person name="Carniel E."/>
            <person name="Larimer F.W."/>
            <person name="Lamerdin J."/>
            <person name="Stoutland P.O."/>
            <person name="Regala W.M."/>
            <person name="Georgescu A.M."/>
            <person name="Vergez L.M."/>
            <person name="Land M.L."/>
            <person name="Motin V.L."/>
            <person name="Brubaker R.R."/>
            <person name="Fowler J."/>
            <person name="Hinnebusch J."/>
            <person name="Marceau M."/>
            <person name="Medigue C."/>
            <person name="Simonet M."/>
            <person name="Chenal-Francisque V."/>
            <person name="Souza B."/>
            <person name="Dacheux D."/>
            <person name="Elliott J.M."/>
            <person name="Derbise A."/>
            <person name="Hauser L.J."/>
            <person name="Garcia E."/>
        </authorList>
    </citation>
    <scope>NUCLEOTIDE SEQUENCE [LARGE SCALE GENOMIC DNA]</scope>
    <source>
        <strain>IP32953</strain>
    </source>
</reference>
<accession>Q66EU4</accession>
<keyword id="KW-0378">Hydrolase</keyword>
<keyword id="KW-0460">Magnesium</keyword>
<keyword id="KW-0464">Manganese</keyword>
<keyword id="KW-0479">Metal-binding</keyword>
<keyword id="KW-0546">Nucleotide metabolism</keyword>
<keyword id="KW-0547">Nucleotide-binding</keyword>
<protein>
    <recommendedName>
        <fullName evidence="1">Inosine/xanthosine triphosphatase</fullName>
        <shortName evidence="1">ITPase/XTPase</shortName>
        <ecNumber evidence="1">3.6.1.73</ecNumber>
    </recommendedName>
    <alternativeName>
        <fullName evidence="1">Non-canonical purine NTP phosphatase</fullName>
    </alternativeName>
    <alternativeName>
        <fullName evidence="1">Non-standard purine NTP phosphatase</fullName>
    </alternativeName>
    <alternativeName>
        <fullName evidence="1">Nucleoside-triphosphate phosphatase</fullName>
        <shortName evidence="1">NTPase</shortName>
    </alternativeName>
</protein>